<comment type="catalytic activity">
    <reaction evidence="1">
        <text>urea + 2 H2O + H(+) = hydrogencarbonate + 2 NH4(+)</text>
        <dbReference type="Rhea" id="RHEA:20557"/>
        <dbReference type="ChEBI" id="CHEBI:15377"/>
        <dbReference type="ChEBI" id="CHEBI:15378"/>
        <dbReference type="ChEBI" id="CHEBI:16199"/>
        <dbReference type="ChEBI" id="CHEBI:17544"/>
        <dbReference type="ChEBI" id="CHEBI:28938"/>
        <dbReference type="EC" id="3.5.1.5"/>
    </reaction>
</comment>
<comment type="pathway">
    <text evidence="1">Nitrogen metabolism; urea degradation; CO(2) and NH(3) from urea (urease route): step 1/1.</text>
</comment>
<comment type="subunit">
    <text evidence="1">Heterotrimer of UreA (gamma), UreB (beta) and UreC (alpha) subunits. Three heterotrimers associate to form the active enzyme.</text>
</comment>
<comment type="subcellular location">
    <subcellularLocation>
        <location evidence="1">Cytoplasm</location>
    </subcellularLocation>
</comment>
<comment type="similarity">
    <text evidence="1">Belongs to the urease gamma subunit family.</text>
</comment>
<evidence type="ECO:0000255" key="1">
    <source>
        <dbReference type="HAMAP-Rule" id="MF_00739"/>
    </source>
</evidence>
<dbReference type="EC" id="3.5.1.5" evidence="1"/>
<dbReference type="EMBL" id="CP000124">
    <property type="protein sequence ID" value="ABA50389.1"/>
    <property type="molecule type" value="Genomic_DNA"/>
</dbReference>
<dbReference type="RefSeq" id="WP_004186513.1">
    <property type="nucleotide sequence ID" value="NC_007434.1"/>
</dbReference>
<dbReference type="SMR" id="Q3JPJ8"/>
<dbReference type="EnsemblBacteria" id="ABA50389">
    <property type="protein sequence ID" value="ABA50389"/>
    <property type="gene ID" value="BURPS1710b_3133"/>
</dbReference>
<dbReference type="GeneID" id="93061237"/>
<dbReference type="KEGG" id="bpm:BURPS1710b_3133"/>
<dbReference type="HOGENOM" id="CLU_145825_1_0_4"/>
<dbReference type="UniPathway" id="UPA00258">
    <property type="reaction ID" value="UER00370"/>
</dbReference>
<dbReference type="Proteomes" id="UP000002700">
    <property type="component" value="Chromosome I"/>
</dbReference>
<dbReference type="GO" id="GO:0005737">
    <property type="term" value="C:cytoplasm"/>
    <property type="evidence" value="ECO:0007669"/>
    <property type="project" value="UniProtKB-SubCell"/>
</dbReference>
<dbReference type="GO" id="GO:0016151">
    <property type="term" value="F:nickel cation binding"/>
    <property type="evidence" value="ECO:0007669"/>
    <property type="project" value="InterPro"/>
</dbReference>
<dbReference type="GO" id="GO:0009039">
    <property type="term" value="F:urease activity"/>
    <property type="evidence" value="ECO:0007669"/>
    <property type="project" value="UniProtKB-UniRule"/>
</dbReference>
<dbReference type="GO" id="GO:0043419">
    <property type="term" value="P:urea catabolic process"/>
    <property type="evidence" value="ECO:0007669"/>
    <property type="project" value="UniProtKB-UniRule"/>
</dbReference>
<dbReference type="CDD" id="cd00390">
    <property type="entry name" value="Urease_gamma"/>
    <property type="match status" value="1"/>
</dbReference>
<dbReference type="Gene3D" id="3.30.280.10">
    <property type="entry name" value="Urease, gamma-like subunit"/>
    <property type="match status" value="1"/>
</dbReference>
<dbReference type="HAMAP" id="MF_00739">
    <property type="entry name" value="Urease_gamma"/>
    <property type="match status" value="1"/>
</dbReference>
<dbReference type="InterPro" id="IPR012010">
    <property type="entry name" value="Urease_gamma"/>
</dbReference>
<dbReference type="InterPro" id="IPR002026">
    <property type="entry name" value="Urease_gamma/gamma-beta_su"/>
</dbReference>
<dbReference type="InterPro" id="IPR036463">
    <property type="entry name" value="Urease_gamma_sf"/>
</dbReference>
<dbReference type="InterPro" id="IPR050069">
    <property type="entry name" value="Urease_subunit"/>
</dbReference>
<dbReference type="NCBIfam" id="NF009712">
    <property type="entry name" value="PRK13241.1"/>
    <property type="match status" value="1"/>
</dbReference>
<dbReference type="NCBIfam" id="TIGR00193">
    <property type="entry name" value="urease_gam"/>
    <property type="match status" value="1"/>
</dbReference>
<dbReference type="PANTHER" id="PTHR33569">
    <property type="entry name" value="UREASE"/>
    <property type="match status" value="1"/>
</dbReference>
<dbReference type="PANTHER" id="PTHR33569:SF1">
    <property type="entry name" value="UREASE"/>
    <property type="match status" value="1"/>
</dbReference>
<dbReference type="Pfam" id="PF00547">
    <property type="entry name" value="Urease_gamma"/>
    <property type="match status" value="1"/>
</dbReference>
<dbReference type="PIRSF" id="PIRSF001223">
    <property type="entry name" value="Urease_gamma"/>
    <property type="match status" value="1"/>
</dbReference>
<dbReference type="SUPFAM" id="SSF54111">
    <property type="entry name" value="Urease, gamma-subunit"/>
    <property type="match status" value="1"/>
</dbReference>
<protein>
    <recommendedName>
        <fullName evidence="1">Urease subunit gamma</fullName>
        <ecNumber evidence="1">3.5.1.5</ecNumber>
    </recommendedName>
    <alternativeName>
        <fullName evidence="1">Urea amidohydrolase subunit gamma</fullName>
    </alternativeName>
</protein>
<feature type="chain" id="PRO_0000234201" description="Urease subunit gamma">
    <location>
        <begin position="1"/>
        <end position="100"/>
    </location>
</feature>
<accession>Q3JPJ8</accession>
<sequence>MKLTPREKDKLLIFTAALLAERRRARGLKLNYPETVAFITAALMEAARDGRTVAEVMHYGTTLLTRDDVMEGVPEMIPDIQVEATFPDGTKLVTVHHPIP</sequence>
<keyword id="KW-0963">Cytoplasm</keyword>
<keyword id="KW-0378">Hydrolase</keyword>
<reference key="1">
    <citation type="journal article" date="2010" name="Genome Biol. Evol.">
        <title>Continuing evolution of Burkholderia mallei through genome reduction and large-scale rearrangements.</title>
        <authorList>
            <person name="Losada L."/>
            <person name="Ronning C.M."/>
            <person name="DeShazer D."/>
            <person name="Woods D."/>
            <person name="Fedorova N."/>
            <person name="Kim H.S."/>
            <person name="Shabalina S.A."/>
            <person name="Pearson T.R."/>
            <person name="Brinkac L."/>
            <person name="Tan P."/>
            <person name="Nandi T."/>
            <person name="Crabtree J."/>
            <person name="Badger J."/>
            <person name="Beckstrom-Sternberg S."/>
            <person name="Saqib M."/>
            <person name="Schutzer S.E."/>
            <person name="Keim P."/>
            <person name="Nierman W.C."/>
        </authorList>
    </citation>
    <scope>NUCLEOTIDE SEQUENCE [LARGE SCALE GENOMIC DNA]</scope>
    <source>
        <strain>1710b</strain>
    </source>
</reference>
<name>URE3_BURP1</name>
<gene>
    <name evidence="1" type="primary">ureA</name>
    <name type="ordered locus">BURPS1710b_3133</name>
</gene>
<organism>
    <name type="scientific">Burkholderia pseudomallei (strain 1710b)</name>
    <dbReference type="NCBI Taxonomy" id="320372"/>
    <lineage>
        <taxon>Bacteria</taxon>
        <taxon>Pseudomonadati</taxon>
        <taxon>Pseudomonadota</taxon>
        <taxon>Betaproteobacteria</taxon>
        <taxon>Burkholderiales</taxon>
        <taxon>Burkholderiaceae</taxon>
        <taxon>Burkholderia</taxon>
        <taxon>pseudomallei group</taxon>
    </lineage>
</organism>
<proteinExistence type="inferred from homology"/>